<gene>
    <name evidence="1" type="primary">gltX1</name>
    <name type="ordered locus">ZMO0900</name>
</gene>
<sequence length="444" mass="50635">MITTRFAPSPTGFLHVGNIRTALINWLYARHHHGRFVLRIDDTDSERSTEEYTQAIRADLAWLNLNPDVEYSQSKRSELYEIRFESLKAKGRIYPCYETPQELDLKRRIAIGRGLPPIYDRAALNLTIEERSELEEKGIKPHWRFRLDHDHAIKWNDLIRGEQRFDPKLLSDPVIRRADGSWLYLLPSVIDDIDMEITTIVRGEDHVSNTATQIQMFQALEAELPEFAHMALLTGGDAKISKRFGADSVADFKADHIEPIALEALLARIGTSDPVEVLTDLAPLVENFDFSHFSRAPARFDMAELKHLNARILHITPYEQVADRLPEAMDAHSWEVIRPNIDDLSEAAFWWSVVKEDIAKPDLSAEDKAYLVEAMAIAKTLDWSSNPWKEWIDILKKQSGRKGKALFLPLRLALTGQSHGPDMAGLLSLIGHEKAIKRLEQAVK</sequence>
<proteinExistence type="inferred from homology"/>
<feature type="chain" id="PRO_0000119710" description="Glutamate--tRNA ligase 1">
    <location>
        <begin position="1"/>
        <end position="444"/>
    </location>
</feature>
<feature type="short sequence motif" description="'HIGH' region" evidence="1">
    <location>
        <begin position="8"/>
        <end position="18"/>
    </location>
</feature>
<feature type="short sequence motif" description="'KMSKS' region" evidence="1">
    <location>
        <begin position="239"/>
        <end position="243"/>
    </location>
</feature>
<feature type="binding site" evidence="1">
    <location>
        <position position="242"/>
    </location>
    <ligand>
        <name>ATP</name>
        <dbReference type="ChEBI" id="CHEBI:30616"/>
    </ligand>
</feature>
<comment type="function">
    <text evidence="1">Catalyzes the attachment of glutamate to tRNA(Glu) in a two-step reaction: glutamate is first activated by ATP to form Glu-AMP and then transferred to the acceptor end of tRNA(Glu).</text>
</comment>
<comment type="catalytic activity">
    <reaction evidence="1">
        <text>tRNA(Glu) + L-glutamate + ATP = L-glutamyl-tRNA(Glu) + AMP + diphosphate</text>
        <dbReference type="Rhea" id="RHEA:23540"/>
        <dbReference type="Rhea" id="RHEA-COMP:9663"/>
        <dbReference type="Rhea" id="RHEA-COMP:9680"/>
        <dbReference type="ChEBI" id="CHEBI:29985"/>
        <dbReference type="ChEBI" id="CHEBI:30616"/>
        <dbReference type="ChEBI" id="CHEBI:33019"/>
        <dbReference type="ChEBI" id="CHEBI:78442"/>
        <dbReference type="ChEBI" id="CHEBI:78520"/>
        <dbReference type="ChEBI" id="CHEBI:456215"/>
        <dbReference type="EC" id="6.1.1.17"/>
    </reaction>
</comment>
<comment type="subunit">
    <text evidence="1">Monomer.</text>
</comment>
<comment type="subcellular location">
    <subcellularLocation>
        <location evidence="1">Cytoplasm</location>
    </subcellularLocation>
</comment>
<comment type="similarity">
    <text evidence="1">Belongs to the class-I aminoacyl-tRNA synthetase family. Glutamate--tRNA ligase type 1 subfamily.</text>
</comment>
<organism>
    <name type="scientific">Zymomonas mobilis subsp. mobilis (strain ATCC 31821 / ZM4 / CP4)</name>
    <dbReference type="NCBI Taxonomy" id="264203"/>
    <lineage>
        <taxon>Bacteria</taxon>
        <taxon>Pseudomonadati</taxon>
        <taxon>Pseudomonadota</taxon>
        <taxon>Alphaproteobacteria</taxon>
        <taxon>Sphingomonadales</taxon>
        <taxon>Zymomonadaceae</taxon>
        <taxon>Zymomonas</taxon>
    </lineage>
</organism>
<evidence type="ECO:0000255" key="1">
    <source>
        <dbReference type="HAMAP-Rule" id="MF_00022"/>
    </source>
</evidence>
<protein>
    <recommendedName>
        <fullName evidence="1">Glutamate--tRNA ligase 1</fullName>
        <ecNumber evidence="1">6.1.1.17</ecNumber>
    </recommendedName>
    <alternativeName>
        <fullName evidence="1">Glutamyl-tRNA synthetase 1</fullName>
        <shortName evidence="1">GluRS 1</shortName>
    </alternativeName>
</protein>
<keyword id="KW-0030">Aminoacyl-tRNA synthetase</keyword>
<keyword id="KW-0067">ATP-binding</keyword>
<keyword id="KW-0963">Cytoplasm</keyword>
<keyword id="KW-0436">Ligase</keyword>
<keyword id="KW-0547">Nucleotide-binding</keyword>
<keyword id="KW-0648">Protein biosynthesis</keyword>
<keyword id="KW-1185">Reference proteome</keyword>
<name>SYE1_ZYMMO</name>
<accession>Q5NP36</accession>
<reference key="1">
    <citation type="journal article" date="2005" name="Nat. Biotechnol.">
        <title>The genome sequence of the ethanologenic bacterium Zymomonas mobilis ZM4.</title>
        <authorList>
            <person name="Seo J.-S."/>
            <person name="Chong H."/>
            <person name="Park H.S."/>
            <person name="Yoon K.-O."/>
            <person name="Jung C."/>
            <person name="Kim J.J."/>
            <person name="Hong J.H."/>
            <person name="Kim H."/>
            <person name="Kim J.-H."/>
            <person name="Kil J.-I."/>
            <person name="Park C.J."/>
            <person name="Oh H.-M."/>
            <person name="Lee J.-S."/>
            <person name="Jin S.-J."/>
            <person name="Um H.-W."/>
            <person name="Lee H.-J."/>
            <person name="Oh S.-J."/>
            <person name="Kim J.Y."/>
            <person name="Kang H.L."/>
            <person name="Lee S.Y."/>
            <person name="Lee K.J."/>
            <person name="Kang H.S."/>
        </authorList>
    </citation>
    <scope>NUCLEOTIDE SEQUENCE [LARGE SCALE GENOMIC DNA]</scope>
    <source>
        <strain>ATCC 31821 / ZM4 / CP4</strain>
    </source>
</reference>
<dbReference type="EC" id="6.1.1.17" evidence="1"/>
<dbReference type="EMBL" id="AE008692">
    <property type="protein sequence ID" value="AAV89524.1"/>
    <property type="molecule type" value="Genomic_DNA"/>
</dbReference>
<dbReference type="SMR" id="Q5NP36"/>
<dbReference type="STRING" id="264203.ZMO0900"/>
<dbReference type="KEGG" id="zmo:ZMO0900"/>
<dbReference type="eggNOG" id="COG0008">
    <property type="taxonomic scope" value="Bacteria"/>
</dbReference>
<dbReference type="eggNOG" id="COG1384">
    <property type="taxonomic scope" value="Bacteria"/>
</dbReference>
<dbReference type="HOGENOM" id="CLU_015768_6_1_5"/>
<dbReference type="Proteomes" id="UP000001173">
    <property type="component" value="Chromosome"/>
</dbReference>
<dbReference type="GO" id="GO:0005737">
    <property type="term" value="C:cytoplasm"/>
    <property type="evidence" value="ECO:0007669"/>
    <property type="project" value="UniProtKB-SubCell"/>
</dbReference>
<dbReference type="GO" id="GO:0005524">
    <property type="term" value="F:ATP binding"/>
    <property type="evidence" value="ECO:0007669"/>
    <property type="project" value="UniProtKB-UniRule"/>
</dbReference>
<dbReference type="GO" id="GO:0004818">
    <property type="term" value="F:glutamate-tRNA ligase activity"/>
    <property type="evidence" value="ECO:0007669"/>
    <property type="project" value="UniProtKB-UniRule"/>
</dbReference>
<dbReference type="GO" id="GO:0000049">
    <property type="term" value="F:tRNA binding"/>
    <property type="evidence" value="ECO:0007669"/>
    <property type="project" value="InterPro"/>
</dbReference>
<dbReference type="GO" id="GO:0006424">
    <property type="term" value="P:glutamyl-tRNA aminoacylation"/>
    <property type="evidence" value="ECO:0007669"/>
    <property type="project" value="UniProtKB-UniRule"/>
</dbReference>
<dbReference type="Gene3D" id="1.10.10.350">
    <property type="match status" value="1"/>
</dbReference>
<dbReference type="Gene3D" id="3.40.50.620">
    <property type="entry name" value="HUPs"/>
    <property type="match status" value="1"/>
</dbReference>
<dbReference type="HAMAP" id="MF_00022">
    <property type="entry name" value="Glu_tRNA_synth_type1"/>
    <property type="match status" value="1"/>
</dbReference>
<dbReference type="InterPro" id="IPR045462">
    <property type="entry name" value="aa-tRNA-synth_I_cd-bd"/>
</dbReference>
<dbReference type="InterPro" id="IPR020751">
    <property type="entry name" value="aa-tRNA-synth_I_codon-bd_sub2"/>
</dbReference>
<dbReference type="InterPro" id="IPR001412">
    <property type="entry name" value="aa-tRNA-synth_I_CS"/>
</dbReference>
<dbReference type="InterPro" id="IPR008925">
    <property type="entry name" value="aa_tRNA-synth_I_cd-bd_sf"/>
</dbReference>
<dbReference type="InterPro" id="IPR004527">
    <property type="entry name" value="Glu-tRNA-ligase_bac/mito"/>
</dbReference>
<dbReference type="InterPro" id="IPR000924">
    <property type="entry name" value="Glu/Gln-tRNA-synth"/>
</dbReference>
<dbReference type="InterPro" id="IPR020058">
    <property type="entry name" value="Glu/Gln-tRNA-synth_Ib_cat-dom"/>
</dbReference>
<dbReference type="InterPro" id="IPR049940">
    <property type="entry name" value="GluQ/Sye"/>
</dbReference>
<dbReference type="InterPro" id="IPR014729">
    <property type="entry name" value="Rossmann-like_a/b/a_fold"/>
</dbReference>
<dbReference type="NCBIfam" id="TIGR00464">
    <property type="entry name" value="gltX_bact"/>
    <property type="match status" value="1"/>
</dbReference>
<dbReference type="PANTHER" id="PTHR43311">
    <property type="entry name" value="GLUTAMATE--TRNA LIGASE"/>
    <property type="match status" value="1"/>
</dbReference>
<dbReference type="PANTHER" id="PTHR43311:SF2">
    <property type="entry name" value="GLUTAMATE--TRNA LIGASE, MITOCHONDRIAL-RELATED"/>
    <property type="match status" value="1"/>
</dbReference>
<dbReference type="Pfam" id="PF19269">
    <property type="entry name" value="Anticodon_2"/>
    <property type="match status" value="1"/>
</dbReference>
<dbReference type="Pfam" id="PF00749">
    <property type="entry name" value="tRNA-synt_1c"/>
    <property type="match status" value="1"/>
</dbReference>
<dbReference type="PRINTS" id="PR00987">
    <property type="entry name" value="TRNASYNTHGLU"/>
</dbReference>
<dbReference type="SUPFAM" id="SSF48163">
    <property type="entry name" value="An anticodon-binding domain of class I aminoacyl-tRNA synthetases"/>
    <property type="match status" value="1"/>
</dbReference>
<dbReference type="SUPFAM" id="SSF52374">
    <property type="entry name" value="Nucleotidylyl transferase"/>
    <property type="match status" value="1"/>
</dbReference>
<dbReference type="PROSITE" id="PS00178">
    <property type="entry name" value="AA_TRNA_LIGASE_I"/>
    <property type="match status" value="1"/>
</dbReference>